<accession>C0QQN6</accession>
<gene>
    <name evidence="1" type="primary">rpsZ</name>
    <name evidence="1" type="synonym">rpsN</name>
    <name type="ordered locus">PERMA_1209</name>
</gene>
<protein>
    <recommendedName>
        <fullName evidence="1">Small ribosomal subunit protein uS14</fullName>
    </recommendedName>
    <alternativeName>
        <fullName evidence="2">30S ribosomal protein S14 type Z</fullName>
    </alternativeName>
</protein>
<proteinExistence type="inferred from homology"/>
<keyword id="KW-0479">Metal-binding</keyword>
<keyword id="KW-1185">Reference proteome</keyword>
<keyword id="KW-0687">Ribonucleoprotein</keyword>
<keyword id="KW-0689">Ribosomal protein</keyword>
<keyword id="KW-0694">RNA-binding</keyword>
<keyword id="KW-0699">rRNA-binding</keyword>
<keyword id="KW-0862">Zinc</keyword>
<sequence>MARKALWAKSFLKEPKFKTRKHARCPLCGRPRGYLRQFDMCRICFRERALRGEIPGVKKASW</sequence>
<name>RS14Z_PERMH</name>
<reference key="1">
    <citation type="journal article" date="2009" name="J. Bacteriol.">
        <title>Complete and draft genome sequences of six members of the Aquificales.</title>
        <authorList>
            <person name="Reysenbach A.-L."/>
            <person name="Hamamura N."/>
            <person name="Podar M."/>
            <person name="Griffiths E."/>
            <person name="Ferreira S."/>
            <person name="Hochstein R."/>
            <person name="Heidelberg J."/>
            <person name="Johnson J."/>
            <person name="Mead D."/>
            <person name="Pohorille A."/>
            <person name="Sarmiento M."/>
            <person name="Schweighofer K."/>
            <person name="Seshadri R."/>
            <person name="Voytek M.A."/>
        </authorList>
    </citation>
    <scope>NUCLEOTIDE SEQUENCE [LARGE SCALE GENOMIC DNA]</scope>
    <source>
        <strain>DSM 14350 / EX-H1</strain>
    </source>
</reference>
<evidence type="ECO:0000255" key="1">
    <source>
        <dbReference type="HAMAP-Rule" id="MF_01364"/>
    </source>
</evidence>
<evidence type="ECO:0000305" key="2"/>
<organism>
    <name type="scientific">Persephonella marina (strain DSM 14350 / EX-H1)</name>
    <dbReference type="NCBI Taxonomy" id="123214"/>
    <lineage>
        <taxon>Bacteria</taxon>
        <taxon>Pseudomonadati</taxon>
        <taxon>Aquificota</taxon>
        <taxon>Aquificia</taxon>
        <taxon>Aquificales</taxon>
        <taxon>Hydrogenothermaceae</taxon>
        <taxon>Persephonella</taxon>
    </lineage>
</organism>
<dbReference type="EMBL" id="CP001230">
    <property type="protein sequence ID" value="ACO03917.1"/>
    <property type="molecule type" value="Genomic_DNA"/>
</dbReference>
<dbReference type="RefSeq" id="WP_012676156.1">
    <property type="nucleotide sequence ID" value="NC_012440.1"/>
</dbReference>
<dbReference type="SMR" id="C0QQN6"/>
<dbReference type="STRING" id="123214.PERMA_1209"/>
<dbReference type="PaxDb" id="123214-PERMA_1209"/>
<dbReference type="KEGG" id="pmx:PERMA_1209"/>
<dbReference type="eggNOG" id="COG0199">
    <property type="taxonomic scope" value="Bacteria"/>
</dbReference>
<dbReference type="HOGENOM" id="CLU_139869_3_0_0"/>
<dbReference type="OrthoDB" id="9810484at2"/>
<dbReference type="Proteomes" id="UP000001366">
    <property type="component" value="Chromosome"/>
</dbReference>
<dbReference type="GO" id="GO:0005737">
    <property type="term" value="C:cytoplasm"/>
    <property type="evidence" value="ECO:0007669"/>
    <property type="project" value="UniProtKB-ARBA"/>
</dbReference>
<dbReference type="GO" id="GO:0015935">
    <property type="term" value="C:small ribosomal subunit"/>
    <property type="evidence" value="ECO:0007669"/>
    <property type="project" value="TreeGrafter"/>
</dbReference>
<dbReference type="GO" id="GO:0019843">
    <property type="term" value="F:rRNA binding"/>
    <property type="evidence" value="ECO:0007669"/>
    <property type="project" value="UniProtKB-UniRule"/>
</dbReference>
<dbReference type="GO" id="GO:0003735">
    <property type="term" value="F:structural constituent of ribosome"/>
    <property type="evidence" value="ECO:0007669"/>
    <property type="project" value="InterPro"/>
</dbReference>
<dbReference type="GO" id="GO:0008270">
    <property type="term" value="F:zinc ion binding"/>
    <property type="evidence" value="ECO:0007669"/>
    <property type="project" value="UniProtKB-UniRule"/>
</dbReference>
<dbReference type="GO" id="GO:0006412">
    <property type="term" value="P:translation"/>
    <property type="evidence" value="ECO:0007669"/>
    <property type="project" value="UniProtKB-UniRule"/>
</dbReference>
<dbReference type="Gene3D" id="4.10.830.10">
    <property type="entry name" value="30s Ribosomal Protein S14, Chain N"/>
    <property type="match status" value="1"/>
</dbReference>
<dbReference type="HAMAP" id="MF_01364_B">
    <property type="entry name" value="Ribosomal_uS14_2_B"/>
    <property type="match status" value="1"/>
</dbReference>
<dbReference type="InterPro" id="IPR001209">
    <property type="entry name" value="Ribosomal_uS14"/>
</dbReference>
<dbReference type="InterPro" id="IPR023053">
    <property type="entry name" value="Ribosomal_uS14_bact"/>
</dbReference>
<dbReference type="InterPro" id="IPR018271">
    <property type="entry name" value="Ribosomal_uS14_CS"/>
</dbReference>
<dbReference type="InterPro" id="IPR043140">
    <property type="entry name" value="Ribosomal_uS14_sf"/>
</dbReference>
<dbReference type="NCBIfam" id="NF005974">
    <property type="entry name" value="PRK08061.1"/>
    <property type="match status" value="1"/>
</dbReference>
<dbReference type="PANTHER" id="PTHR19836">
    <property type="entry name" value="30S RIBOSOMAL PROTEIN S14"/>
    <property type="match status" value="1"/>
</dbReference>
<dbReference type="PANTHER" id="PTHR19836:SF19">
    <property type="entry name" value="SMALL RIBOSOMAL SUBUNIT PROTEIN US14M"/>
    <property type="match status" value="1"/>
</dbReference>
<dbReference type="Pfam" id="PF00253">
    <property type="entry name" value="Ribosomal_S14"/>
    <property type="match status" value="1"/>
</dbReference>
<dbReference type="SUPFAM" id="SSF57716">
    <property type="entry name" value="Glucocorticoid receptor-like (DNA-binding domain)"/>
    <property type="match status" value="1"/>
</dbReference>
<dbReference type="PROSITE" id="PS00527">
    <property type="entry name" value="RIBOSOMAL_S14"/>
    <property type="match status" value="1"/>
</dbReference>
<feature type="chain" id="PRO_1000166777" description="Small ribosomal subunit protein uS14">
    <location>
        <begin position="1"/>
        <end position="62"/>
    </location>
</feature>
<feature type="binding site" evidence="1">
    <location>
        <position position="25"/>
    </location>
    <ligand>
        <name>Zn(2+)</name>
        <dbReference type="ChEBI" id="CHEBI:29105"/>
    </ligand>
</feature>
<feature type="binding site" evidence="1">
    <location>
        <position position="28"/>
    </location>
    <ligand>
        <name>Zn(2+)</name>
        <dbReference type="ChEBI" id="CHEBI:29105"/>
    </ligand>
</feature>
<feature type="binding site" evidence="1">
    <location>
        <position position="41"/>
    </location>
    <ligand>
        <name>Zn(2+)</name>
        <dbReference type="ChEBI" id="CHEBI:29105"/>
    </ligand>
</feature>
<feature type="binding site" evidence="1">
    <location>
        <position position="44"/>
    </location>
    <ligand>
        <name>Zn(2+)</name>
        <dbReference type="ChEBI" id="CHEBI:29105"/>
    </ligand>
</feature>
<comment type="function">
    <text evidence="1">Binds 16S rRNA, required for the assembly of 30S particles and may also be responsible for determining the conformation of the 16S rRNA at the A site.</text>
</comment>
<comment type="cofactor">
    <cofactor evidence="1">
        <name>Zn(2+)</name>
        <dbReference type="ChEBI" id="CHEBI:29105"/>
    </cofactor>
    <text evidence="1">Binds 1 zinc ion per subunit.</text>
</comment>
<comment type="subunit">
    <text evidence="1">Part of the 30S ribosomal subunit. Contacts proteins S3 and S10.</text>
</comment>
<comment type="similarity">
    <text evidence="1">Belongs to the universal ribosomal protein uS14 family. Zinc-binding uS14 subfamily.</text>
</comment>